<protein>
    <recommendedName>
        <fullName evidence="9">Arginine-hydroxylase NDUFAF5, mitochondrial</fullName>
        <ecNumber evidence="10">1.-.-.-</ecNumber>
    </recommendedName>
    <alternativeName>
        <fullName evidence="11">NADH dehydrogenase [ubiquinone] 1 alpha subcomplex assembly factor 5</fullName>
    </alternativeName>
    <alternativeName>
        <fullName>Putative methyltransferase NDUFAF5</fullName>
        <ecNumber evidence="9">2.1.1.-</ecNumber>
    </alternativeName>
</protein>
<reference key="1">
    <citation type="journal article" date="2004" name="Nat. Genet.">
        <title>Complete sequencing and characterization of 21,243 full-length human cDNAs.</title>
        <authorList>
            <person name="Ota T."/>
            <person name="Suzuki Y."/>
            <person name="Nishikawa T."/>
            <person name="Otsuki T."/>
            <person name="Sugiyama T."/>
            <person name="Irie R."/>
            <person name="Wakamatsu A."/>
            <person name="Hayashi K."/>
            <person name="Sato H."/>
            <person name="Nagai K."/>
            <person name="Kimura K."/>
            <person name="Makita H."/>
            <person name="Sekine M."/>
            <person name="Obayashi M."/>
            <person name="Nishi T."/>
            <person name="Shibahara T."/>
            <person name="Tanaka T."/>
            <person name="Ishii S."/>
            <person name="Yamamoto J."/>
            <person name="Saito K."/>
            <person name="Kawai Y."/>
            <person name="Isono Y."/>
            <person name="Nakamura Y."/>
            <person name="Nagahari K."/>
            <person name="Murakami K."/>
            <person name="Yasuda T."/>
            <person name="Iwayanagi T."/>
            <person name="Wagatsuma M."/>
            <person name="Shiratori A."/>
            <person name="Sudo H."/>
            <person name="Hosoiri T."/>
            <person name="Kaku Y."/>
            <person name="Kodaira H."/>
            <person name="Kondo H."/>
            <person name="Sugawara M."/>
            <person name="Takahashi M."/>
            <person name="Kanda K."/>
            <person name="Yokoi T."/>
            <person name="Furuya T."/>
            <person name="Kikkawa E."/>
            <person name="Omura Y."/>
            <person name="Abe K."/>
            <person name="Kamihara K."/>
            <person name="Katsuta N."/>
            <person name="Sato K."/>
            <person name="Tanikawa M."/>
            <person name="Yamazaki M."/>
            <person name="Ninomiya K."/>
            <person name="Ishibashi T."/>
            <person name="Yamashita H."/>
            <person name="Murakawa K."/>
            <person name="Fujimori K."/>
            <person name="Tanai H."/>
            <person name="Kimata M."/>
            <person name="Watanabe M."/>
            <person name="Hiraoka S."/>
            <person name="Chiba Y."/>
            <person name="Ishida S."/>
            <person name="Ono Y."/>
            <person name="Takiguchi S."/>
            <person name="Watanabe S."/>
            <person name="Yosida M."/>
            <person name="Hotuta T."/>
            <person name="Kusano J."/>
            <person name="Kanehori K."/>
            <person name="Takahashi-Fujii A."/>
            <person name="Hara H."/>
            <person name="Tanase T.-O."/>
            <person name="Nomura Y."/>
            <person name="Togiya S."/>
            <person name="Komai F."/>
            <person name="Hara R."/>
            <person name="Takeuchi K."/>
            <person name="Arita M."/>
            <person name="Imose N."/>
            <person name="Musashino K."/>
            <person name="Yuuki H."/>
            <person name="Oshima A."/>
            <person name="Sasaki N."/>
            <person name="Aotsuka S."/>
            <person name="Yoshikawa Y."/>
            <person name="Matsunawa H."/>
            <person name="Ichihara T."/>
            <person name="Shiohata N."/>
            <person name="Sano S."/>
            <person name="Moriya S."/>
            <person name="Momiyama H."/>
            <person name="Satoh N."/>
            <person name="Takami S."/>
            <person name="Terashima Y."/>
            <person name="Suzuki O."/>
            <person name="Nakagawa S."/>
            <person name="Senoh A."/>
            <person name="Mizoguchi H."/>
            <person name="Goto Y."/>
            <person name="Shimizu F."/>
            <person name="Wakebe H."/>
            <person name="Hishigaki H."/>
            <person name="Watanabe T."/>
            <person name="Sugiyama A."/>
            <person name="Takemoto M."/>
            <person name="Kawakami B."/>
            <person name="Yamazaki M."/>
            <person name="Watanabe K."/>
            <person name="Kumagai A."/>
            <person name="Itakura S."/>
            <person name="Fukuzumi Y."/>
            <person name="Fujimori Y."/>
            <person name="Komiyama M."/>
            <person name="Tashiro H."/>
            <person name="Tanigami A."/>
            <person name="Fujiwara T."/>
            <person name="Ono T."/>
            <person name="Yamada K."/>
            <person name="Fujii Y."/>
            <person name="Ozaki K."/>
            <person name="Hirao M."/>
            <person name="Ohmori Y."/>
            <person name="Kawabata A."/>
            <person name="Hikiji T."/>
            <person name="Kobatake N."/>
            <person name="Inagaki H."/>
            <person name="Ikema Y."/>
            <person name="Okamoto S."/>
            <person name="Okitani R."/>
            <person name="Kawakami T."/>
            <person name="Noguchi S."/>
            <person name="Itoh T."/>
            <person name="Shigeta K."/>
            <person name="Senba T."/>
            <person name="Matsumura K."/>
            <person name="Nakajima Y."/>
            <person name="Mizuno T."/>
            <person name="Morinaga M."/>
            <person name="Sasaki M."/>
            <person name="Togashi T."/>
            <person name="Oyama M."/>
            <person name="Hata H."/>
            <person name="Watanabe M."/>
            <person name="Komatsu T."/>
            <person name="Mizushima-Sugano J."/>
            <person name="Satoh T."/>
            <person name="Shirai Y."/>
            <person name="Takahashi Y."/>
            <person name="Nakagawa K."/>
            <person name="Okumura K."/>
            <person name="Nagase T."/>
            <person name="Nomura N."/>
            <person name="Kikuchi H."/>
            <person name="Masuho Y."/>
            <person name="Yamashita R."/>
            <person name="Nakai K."/>
            <person name="Yada T."/>
            <person name="Nakamura Y."/>
            <person name="Ohara O."/>
            <person name="Isogai T."/>
            <person name="Sugano S."/>
        </authorList>
    </citation>
    <scope>NUCLEOTIDE SEQUENCE [LARGE SCALE MRNA] (ISOFORM 1)</scope>
    <source>
        <tissue>Brain</tissue>
    </source>
</reference>
<reference key="2">
    <citation type="journal article" date="2001" name="Nature">
        <title>The DNA sequence and comparative analysis of human chromosome 20.</title>
        <authorList>
            <person name="Deloukas P."/>
            <person name="Matthews L.H."/>
            <person name="Ashurst J.L."/>
            <person name="Burton J."/>
            <person name="Gilbert J.G.R."/>
            <person name="Jones M."/>
            <person name="Stavrides G."/>
            <person name="Almeida J.P."/>
            <person name="Babbage A.K."/>
            <person name="Bagguley C.L."/>
            <person name="Bailey J."/>
            <person name="Barlow K.F."/>
            <person name="Bates K.N."/>
            <person name="Beard L.M."/>
            <person name="Beare D.M."/>
            <person name="Beasley O.P."/>
            <person name="Bird C.P."/>
            <person name="Blakey S.E."/>
            <person name="Bridgeman A.M."/>
            <person name="Brown A.J."/>
            <person name="Buck D."/>
            <person name="Burrill W.D."/>
            <person name="Butler A.P."/>
            <person name="Carder C."/>
            <person name="Carter N.P."/>
            <person name="Chapman J.C."/>
            <person name="Clamp M."/>
            <person name="Clark G."/>
            <person name="Clark L.N."/>
            <person name="Clark S.Y."/>
            <person name="Clee C.M."/>
            <person name="Clegg S."/>
            <person name="Cobley V.E."/>
            <person name="Collier R.E."/>
            <person name="Connor R.E."/>
            <person name="Corby N.R."/>
            <person name="Coulson A."/>
            <person name="Coville G.J."/>
            <person name="Deadman R."/>
            <person name="Dhami P.D."/>
            <person name="Dunn M."/>
            <person name="Ellington A.G."/>
            <person name="Frankland J.A."/>
            <person name="Fraser A."/>
            <person name="French L."/>
            <person name="Garner P."/>
            <person name="Grafham D.V."/>
            <person name="Griffiths C."/>
            <person name="Griffiths M.N.D."/>
            <person name="Gwilliam R."/>
            <person name="Hall R.E."/>
            <person name="Hammond S."/>
            <person name="Harley J.L."/>
            <person name="Heath P.D."/>
            <person name="Ho S."/>
            <person name="Holden J.L."/>
            <person name="Howden P.J."/>
            <person name="Huckle E."/>
            <person name="Hunt A.R."/>
            <person name="Hunt S.E."/>
            <person name="Jekosch K."/>
            <person name="Johnson C.M."/>
            <person name="Johnson D."/>
            <person name="Kay M.P."/>
            <person name="Kimberley A.M."/>
            <person name="King A."/>
            <person name="Knights A."/>
            <person name="Laird G.K."/>
            <person name="Lawlor S."/>
            <person name="Lehvaeslaiho M.H."/>
            <person name="Leversha M.A."/>
            <person name="Lloyd C."/>
            <person name="Lloyd D.M."/>
            <person name="Lovell J.D."/>
            <person name="Marsh V.L."/>
            <person name="Martin S.L."/>
            <person name="McConnachie L.J."/>
            <person name="McLay K."/>
            <person name="McMurray A.A."/>
            <person name="Milne S.A."/>
            <person name="Mistry D."/>
            <person name="Moore M.J.F."/>
            <person name="Mullikin J.C."/>
            <person name="Nickerson T."/>
            <person name="Oliver K."/>
            <person name="Parker A."/>
            <person name="Patel R."/>
            <person name="Pearce T.A.V."/>
            <person name="Peck A.I."/>
            <person name="Phillimore B.J.C.T."/>
            <person name="Prathalingam S.R."/>
            <person name="Plumb R.W."/>
            <person name="Ramsay H."/>
            <person name="Rice C.M."/>
            <person name="Ross M.T."/>
            <person name="Scott C.E."/>
            <person name="Sehra H.K."/>
            <person name="Shownkeen R."/>
            <person name="Sims S."/>
            <person name="Skuce C.D."/>
            <person name="Smith M.L."/>
            <person name="Soderlund C."/>
            <person name="Steward C.A."/>
            <person name="Sulston J.E."/>
            <person name="Swann R.M."/>
            <person name="Sycamore N."/>
            <person name="Taylor R."/>
            <person name="Tee L."/>
            <person name="Thomas D.W."/>
            <person name="Thorpe A."/>
            <person name="Tracey A."/>
            <person name="Tromans A.C."/>
            <person name="Vaudin M."/>
            <person name="Wall M."/>
            <person name="Wallis J.M."/>
            <person name="Whitehead S.L."/>
            <person name="Whittaker P."/>
            <person name="Willey D.L."/>
            <person name="Williams L."/>
            <person name="Williams S.A."/>
            <person name="Wilming L."/>
            <person name="Wray P.W."/>
            <person name="Hubbard T."/>
            <person name="Durbin R.M."/>
            <person name="Bentley D.R."/>
            <person name="Beck S."/>
            <person name="Rogers J."/>
        </authorList>
    </citation>
    <scope>NUCLEOTIDE SEQUENCE [LARGE SCALE GENOMIC DNA]</scope>
</reference>
<reference key="3">
    <citation type="submission" date="2005-09" db="EMBL/GenBank/DDBJ databases">
        <authorList>
            <person name="Mural R.J."/>
            <person name="Istrail S."/>
            <person name="Sutton G.G."/>
            <person name="Florea L."/>
            <person name="Halpern A.L."/>
            <person name="Mobarry C.M."/>
            <person name="Lippert R."/>
            <person name="Walenz B."/>
            <person name="Shatkay H."/>
            <person name="Dew I."/>
            <person name="Miller J.R."/>
            <person name="Flanigan M.J."/>
            <person name="Edwards N.J."/>
            <person name="Bolanos R."/>
            <person name="Fasulo D."/>
            <person name="Halldorsson B.V."/>
            <person name="Hannenhalli S."/>
            <person name="Turner R."/>
            <person name="Yooseph S."/>
            <person name="Lu F."/>
            <person name="Nusskern D.R."/>
            <person name="Shue B.C."/>
            <person name="Zheng X.H."/>
            <person name="Zhong F."/>
            <person name="Delcher A.L."/>
            <person name="Huson D.H."/>
            <person name="Kravitz S.A."/>
            <person name="Mouchard L."/>
            <person name="Reinert K."/>
            <person name="Remington K.A."/>
            <person name="Clark A.G."/>
            <person name="Waterman M.S."/>
            <person name="Eichler E.E."/>
            <person name="Adams M.D."/>
            <person name="Hunkapiller M.W."/>
            <person name="Myers E.W."/>
            <person name="Venter J.C."/>
        </authorList>
    </citation>
    <scope>NUCLEOTIDE SEQUENCE [LARGE SCALE GENOMIC DNA]</scope>
</reference>
<reference key="4">
    <citation type="journal article" date="2004" name="Genome Res.">
        <title>The status, quality, and expansion of the NIH full-length cDNA project: the Mammalian Gene Collection (MGC).</title>
        <authorList>
            <consortium name="The MGC Project Team"/>
        </authorList>
    </citation>
    <scope>NUCLEOTIDE SEQUENCE [LARGE SCALE MRNA] (ISOFORM 2)</scope>
    <scope>NUCLEOTIDE SEQUENCE [LARGE SCALE MRNA] OF 50-345 (ISOFORM 1)</scope>
    <source>
        <tissue>Pancreas</tissue>
    </source>
</reference>
<reference key="5">
    <citation type="journal article" date="2008" name="Am. J. Hum. Genet.">
        <title>Mutation of C20orf7 disrupts complex I assembly and causes lethal neonatal mitochondrial disease.</title>
        <authorList>
            <person name="Sugiana C."/>
            <person name="Pagliarini D.J."/>
            <person name="McKenzie M."/>
            <person name="Kirby D.M."/>
            <person name="Salemi R."/>
            <person name="Abu-Amero K.K."/>
            <person name="Dahl H.-H.M."/>
            <person name="Hutchison W.M."/>
            <person name="Vascotto K.A."/>
            <person name="Smith S.M."/>
            <person name="Newbold R.F."/>
            <person name="Christodoulou J."/>
            <person name="Calvo S."/>
            <person name="Mootha V.K."/>
            <person name="Ryan M.T."/>
            <person name="Thorburn D.R."/>
        </authorList>
    </citation>
    <scope>FUNCTION</scope>
    <scope>SUBCELLULAR LOCATION</scope>
    <scope>INVOLVEMENT IN MC1DN16</scope>
    <scope>VARIANT MC1DN16 PRO-229</scope>
</reference>
<reference key="6">
    <citation type="journal article" date="2016" name="J. Biol. Chem.">
        <title>NDUFAF5 hydroxylates NDUFS7 at an early stage in the assembly of human complex I.</title>
        <authorList>
            <person name="Rhein V.F."/>
            <person name="Carroll J."/>
            <person name="Ding S."/>
            <person name="Fearnley I.M."/>
            <person name="Walker J.E."/>
        </authorList>
    </citation>
    <scope>FUNCTION</scope>
    <scope>SUBCELLULAR LOCATION</scope>
    <scope>INTERACTION WITH NDUFS7</scope>
</reference>
<reference key="7">
    <citation type="journal article" date="2016" name="Mol. Cell">
        <title>Mitochondrial protein interaction mapping identifies regulators of respiratory chain function.</title>
        <authorList>
            <person name="Floyd B.J."/>
            <person name="Wilkerson E.M."/>
            <person name="Veling M.T."/>
            <person name="Minogue C.E."/>
            <person name="Xia C."/>
            <person name="Beebe E.T."/>
            <person name="Wrobel R.L."/>
            <person name="Cho H."/>
            <person name="Kremer L.S."/>
            <person name="Alston C.L."/>
            <person name="Gromek K.A."/>
            <person name="Dolan B.K."/>
            <person name="Ulbrich A."/>
            <person name="Stefely J.A."/>
            <person name="Bohl S.L."/>
            <person name="Werner K.M."/>
            <person name="Jochem A."/>
            <person name="Westphall M.S."/>
            <person name="Rensvold J.W."/>
            <person name="Taylor R.W."/>
            <person name="Prokisch H."/>
            <person name="Kim J.J."/>
            <person name="Coon J.J."/>
            <person name="Pagliarini D.J."/>
        </authorList>
    </citation>
    <scope>INTERACTION WITH NDUFAF8</scope>
</reference>
<reference key="8">
    <citation type="journal article" date="2022" name="Nature">
        <title>Defining mitochondrial protein functions through deep multiomic profiling.</title>
        <authorList>
            <person name="Rensvold J.W."/>
            <person name="Shishkova E."/>
            <person name="Sverchkov Y."/>
            <person name="Miller I.J."/>
            <person name="Cetinkaya A."/>
            <person name="Pyle A."/>
            <person name="Manicki M."/>
            <person name="Brademan D.R."/>
            <person name="Alanay Y."/>
            <person name="Raiman J."/>
            <person name="Jochem A."/>
            <person name="Hutchins P.D."/>
            <person name="Peters S.R."/>
            <person name="Linke V."/>
            <person name="Overmyer K.A."/>
            <person name="Salome A.Z."/>
            <person name="Hebert A.S."/>
            <person name="Vincent C.E."/>
            <person name="Kwiecien N.W."/>
            <person name="Rush M.J.P."/>
            <person name="Westphall M.S."/>
            <person name="Craven M."/>
            <person name="Akarsu N.A."/>
            <person name="Taylor R.W."/>
            <person name="Coon J.J."/>
            <person name="Pagliarini D.J."/>
        </authorList>
    </citation>
    <scope>SUBCELLULAR LOCATION</scope>
    <scope>INTERACTION WITH PYURF</scope>
</reference>
<reference key="9">
    <citation type="journal article" date="2010" name="J. Med. Genet.">
        <title>Defective complex I assembly due to C20orf7 mutations as a new cause of Leigh syndrome.</title>
        <authorList>
            <person name="Gerards M."/>
            <person name="Sluiter W."/>
            <person name="van den Bosch B.J."/>
            <person name="de Wit L.E."/>
            <person name="Calis C.M."/>
            <person name="Frentzen M."/>
            <person name="Akbari H."/>
            <person name="Schoonderwoerd K."/>
            <person name="Scholte H.R."/>
            <person name="Jongbloed R.J."/>
            <person name="Hendrickx A.T."/>
            <person name="de Coo I.F."/>
            <person name="Smeets H.J."/>
        </authorList>
    </citation>
    <scope>INVOLVEMENT IN MC1DN16</scope>
    <scope>VARIANT MC1DN16 PHE-159</scope>
</reference>
<reference key="10">
    <citation type="journal article" date="2012" name="J. Inherit. Metab. Dis.">
        <title>Combined OXPHOS complex I and IV defect, due to mutated complex I assembly factor C20ORF7.</title>
        <authorList>
            <person name="Saada A."/>
            <person name="Edvardson S."/>
            <person name="Shaag A."/>
            <person name="Chung W.K."/>
            <person name="Segel R."/>
            <person name="Miller C."/>
            <person name="Jalas C."/>
            <person name="Elpeleg O."/>
        </authorList>
    </citation>
    <scope>INVOLVEMENT IN MC1DN16</scope>
    <scope>VARIANT MC1DN16 VAL-250</scope>
</reference>
<sequence>MLRPAGLWRLCRRPWAARVPAENLGRREVTSGVSPRGSTSPRTLNIFDRDLKRKQKNWAARQPEPTKFDYLKEEVGSRIADRVYDIPRNFPLALDLGCGRGYIAQYLNKETIGKFFQADIAENALKNSSETEIPTVSVLADEEFLPFKENTFDLVVSSLSLHWVNDLPRALEQIHYILKPDGVFIGAMFGGDTLYELRCSLQLAETEREGGFSPHISPFTAVNDLGHLLGRAGFNTLTVDTDEIQVNYPGMFELMEDLQGMGESNCAWNRKALLHRDTMLAAAAVYREMYRNEDGSVPATYQIYYMIGWKYHESQARPAERGSATVSFGELGKINNLMPPGKKSQ</sequence>
<name>NDUF5_HUMAN</name>
<comment type="function">
    <text evidence="2 5 9">Arginine hydroxylase that mediates hydroxylation of 'Arg-111' of NDUFS7 and is involved in the assembly of mitochondrial NADH:ubiquinone oxidoreductase complex (complex I, MT-ND1) at early stages (PubMed:18940309, PubMed:27226634). May also have methyltransferase activity (Probable).</text>
</comment>
<comment type="subunit">
    <text evidence="5 6 7">Interacts with NDUFAF8, leading to stabilize NDUFAF5 (PubMed:27499296). Interacts with NDUFS7 (PubMed:27226634). Interacts with PYURF (via TRM112 domain); the interaction is direct and stabilizes NDUFAF5 protein (PubMed:35614220).</text>
</comment>
<comment type="interaction">
    <interactant intactId="EBI-10762958">
        <id>Q5TEU4</id>
    </interactant>
    <interactant intactId="EBI-20593474">
        <id>A1L188</id>
        <label>NDUFAF8</label>
    </interactant>
    <organismsDiffer>false</organismsDiffer>
    <experiments>11</experiments>
</comment>
<comment type="subcellular location">
    <subcellularLocation>
        <location evidence="2 5 7">Mitochondrion inner membrane</location>
    </subcellularLocation>
    <text evidence="2">Peripherally localized on the matrix face of the mitochondrial inner membrane.</text>
</comment>
<comment type="alternative products">
    <event type="alternative splicing"/>
    <isoform>
        <id>Q5TEU4-1</id>
        <name>1</name>
        <sequence type="displayed"/>
    </isoform>
    <isoform>
        <id>Q5TEU4-2</id>
        <name>2</name>
        <sequence type="described" ref="VSP_028637"/>
    </isoform>
</comment>
<comment type="disease" evidence="2 3 4">
    <disease id="DI-05413">
        <name>Mitochondrial complex I deficiency, nuclear type 16</name>
        <acronym>MC1DN16</acronym>
        <description>A form of mitochondrial complex I deficiency, the most common biochemical signature of mitochondrial disorders, a group of highly heterogeneous conditions characterized by defective oxidative phosphorylation, which collectively affects 1 in 5-10000 live births. Clinical disorders have variable severity, ranging from lethal neonatal disease to adult-onset neurodegenerative disorders. Phenotypes include macrocephaly with progressive leukodystrophy, non-specific encephalopathy, cardiomyopathy, myopathy, liver disease, Leigh syndrome, Leber hereditary optic neuropathy, and some forms of Parkinson disease. MC1DN16 transmission pattern is consistent with autosomal recessive inheritance.</description>
        <dbReference type="MIM" id="618238"/>
    </disease>
    <text>The disease is caused by variants affecting the gene represented in this entry.</text>
</comment>
<comment type="similarity">
    <text evidence="9">Belongs to the methyltransferase superfamily.</text>
</comment>
<feature type="transit peptide" description="Mitochondrion" evidence="1">
    <location>
        <begin position="1"/>
        <end position="36"/>
    </location>
</feature>
<feature type="chain" id="PRO_0000307213" description="Arginine-hydroxylase NDUFAF5, mitochondrial">
    <location>
        <begin position="37"/>
        <end position="345"/>
    </location>
</feature>
<feature type="splice variant" id="VSP_028637" description="In isoform 2." evidence="8">
    <original>ETIGKFFQADIAENALKNSSETEIPTVSVLADEEFLPFKENTFDLVVSSLS</original>
    <variation>LQLFHCRKLLESFSKLTLQKMLC</variation>
    <location>
        <begin position="110"/>
        <end position="160"/>
    </location>
</feature>
<feature type="sequence variant" id="VAR_067956" description="In MC1DN16; dbSNP:rs267606689." evidence="3">
    <original>L</original>
    <variation>F</variation>
    <location>
        <position position="159"/>
    </location>
</feature>
<feature type="sequence variant" id="VAR_054119" description="In MC1DN16; dbSNP:rs118203929." evidence="2">
    <original>L</original>
    <variation>P</variation>
    <location>
        <position position="229"/>
    </location>
</feature>
<feature type="sequence variant" id="VAR_076864" description="In MC1DN16; dbSNP:rs757043077." evidence="4">
    <original>G</original>
    <variation>V</variation>
    <location>
        <position position="250"/>
    </location>
</feature>
<feature type="sequence variant" id="VAR_035376" description="In dbSNP:rs6042368.">
    <original>L</original>
    <variation>F</variation>
    <location>
        <position position="337"/>
    </location>
</feature>
<keyword id="KW-0025">Alternative splicing</keyword>
<keyword id="KW-0225">Disease variant</keyword>
<keyword id="KW-0431">Leigh syndrome</keyword>
<keyword id="KW-0472">Membrane</keyword>
<keyword id="KW-0489">Methyltransferase</keyword>
<keyword id="KW-0496">Mitochondrion</keyword>
<keyword id="KW-0999">Mitochondrion inner membrane</keyword>
<keyword id="KW-0560">Oxidoreductase</keyword>
<keyword id="KW-1274">Primary mitochondrial disease</keyword>
<keyword id="KW-1267">Proteomics identification</keyword>
<keyword id="KW-1185">Reference proteome</keyword>
<keyword id="KW-0808">Transferase</keyword>
<keyword id="KW-0809">Transit peptide</keyword>
<dbReference type="EC" id="1.-.-.-" evidence="10"/>
<dbReference type="EC" id="2.1.1.-" evidence="9"/>
<dbReference type="EMBL" id="AK025977">
    <property type="protein sequence ID" value="BAB15305.1"/>
    <property type="molecule type" value="mRNA"/>
</dbReference>
<dbReference type="EMBL" id="AK289781">
    <property type="protein sequence ID" value="BAF82470.1"/>
    <property type="molecule type" value="mRNA"/>
</dbReference>
<dbReference type="EMBL" id="AL161659">
    <property type="status" value="NOT_ANNOTATED_CDS"/>
    <property type="molecule type" value="Genomic_DNA"/>
</dbReference>
<dbReference type="EMBL" id="AL109657">
    <property type="status" value="NOT_ANNOTATED_CDS"/>
    <property type="molecule type" value="Genomic_DNA"/>
</dbReference>
<dbReference type="EMBL" id="CH471133">
    <property type="protein sequence ID" value="EAX10311.1"/>
    <property type="molecule type" value="Genomic_DNA"/>
</dbReference>
<dbReference type="EMBL" id="BC005984">
    <property type="protein sequence ID" value="AAH05984.1"/>
    <property type="molecule type" value="mRNA"/>
</dbReference>
<dbReference type="EMBL" id="BC073158">
    <property type="protein sequence ID" value="AAH73158.1"/>
    <property type="molecule type" value="mRNA"/>
</dbReference>
<dbReference type="CCDS" id="CCDS13118.1">
    <molecule id="Q5TEU4-1"/>
</dbReference>
<dbReference type="CCDS" id="CCDS33441.1">
    <molecule id="Q5TEU4-2"/>
</dbReference>
<dbReference type="RefSeq" id="NP_001034464.1">
    <molecule id="Q5TEU4-2"/>
    <property type="nucleotide sequence ID" value="NM_001039375.3"/>
</dbReference>
<dbReference type="RefSeq" id="NP_077025.2">
    <molecule id="Q5TEU4-1"/>
    <property type="nucleotide sequence ID" value="NM_024120.4"/>
</dbReference>
<dbReference type="SMR" id="Q5TEU4"/>
<dbReference type="BioGRID" id="122554">
    <property type="interactions" value="110"/>
</dbReference>
<dbReference type="FunCoup" id="Q5TEU4">
    <property type="interactions" value="1012"/>
</dbReference>
<dbReference type="IntAct" id="Q5TEU4">
    <property type="interactions" value="57"/>
</dbReference>
<dbReference type="MINT" id="Q5TEU4"/>
<dbReference type="STRING" id="9606.ENSP00000367346"/>
<dbReference type="iPTMnet" id="Q5TEU4"/>
<dbReference type="PhosphoSitePlus" id="Q5TEU4"/>
<dbReference type="SwissPalm" id="Q5TEU4"/>
<dbReference type="BioMuta" id="NDUFAF5"/>
<dbReference type="DMDM" id="74762247"/>
<dbReference type="jPOST" id="Q5TEU4"/>
<dbReference type="MassIVE" id="Q5TEU4"/>
<dbReference type="PaxDb" id="9606-ENSP00000367346"/>
<dbReference type="PeptideAtlas" id="Q5TEU4"/>
<dbReference type="ProteomicsDB" id="65062">
    <molecule id="Q5TEU4-1"/>
</dbReference>
<dbReference type="ProteomicsDB" id="65063">
    <molecule id="Q5TEU4-2"/>
</dbReference>
<dbReference type="Pumba" id="Q5TEU4"/>
<dbReference type="Antibodypedia" id="24277">
    <property type="antibodies" value="129 antibodies from 21 providers"/>
</dbReference>
<dbReference type="DNASU" id="79133"/>
<dbReference type="Ensembl" id="ENST00000378106.10">
    <molecule id="Q5TEU4-1"/>
    <property type="protein sequence ID" value="ENSP00000367346.5"/>
    <property type="gene ID" value="ENSG00000101247.18"/>
</dbReference>
<dbReference type="Ensembl" id="ENST00000463598.1">
    <molecule id="Q5TEU4-2"/>
    <property type="protein sequence ID" value="ENSP00000420497.1"/>
    <property type="gene ID" value="ENSG00000101247.18"/>
</dbReference>
<dbReference type="GeneID" id="79133"/>
<dbReference type="KEGG" id="hsa:79133"/>
<dbReference type="MANE-Select" id="ENST00000378106.10">
    <property type="protein sequence ID" value="ENSP00000367346.5"/>
    <property type="RefSeq nucleotide sequence ID" value="NM_024120.5"/>
    <property type="RefSeq protein sequence ID" value="NP_077025.2"/>
</dbReference>
<dbReference type="UCSC" id="uc002wom.4">
    <molecule id="Q5TEU4-1"/>
    <property type="organism name" value="human"/>
</dbReference>
<dbReference type="AGR" id="HGNC:15899"/>
<dbReference type="CTD" id="79133"/>
<dbReference type="DisGeNET" id="79133"/>
<dbReference type="GeneCards" id="NDUFAF5"/>
<dbReference type="HGNC" id="HGNC:15899">
    <property type="gene designation" value="NDUFAF5"/>
</dbReference>
<dbReference type="HPA" id="ENSG00000101247">
    <property type="expression patterns" value="Tissue enhanced (skeletal)"/>
</dbReference>
<dbReference type="MalaCards" id="NDUFAF5"/>
<dbReference type="MIM" id="612360">
    <property type="type" value="gene"/>
</dbReference>
<dbReference type="MIM" id="618238">
    <property type="type" value="phenotype"/>
</dbReference>
<dbReference type="neXtProt" id="NX_Q5TEU4"/>
<dbReference type="OpenTargets" id="ENSG00000101247"/>
<dbReference type="Orphanet" id="2609">
    <property type="disease" value="Isolated complex I deficiency"/>
</dbReference>
<dbReference type="PharmGKB" id="PA25780"/>
<dbReference type="VEuPathDB" id="HostDB:ENSG00000101247"/>
<dbReference type="eggNOG" id="KOG2940">
    <property type="taxonomic scope" value="Eukaryota"/>
</dbReference>
<dbReference type="GeneTree" id="ENSGT00390000014687"/>
<dbReference type="HOGENOM" id="CLU_046586_0_2_1"/>
<dbReference type="InParanoid" id="Q5TEU4"/>
<dbReference type="OMA" id="YEVVYGH"/>
<dbReference type="OrthoDB" id="16816at2759"/>
<dbReference type="PAN-GO" id="Q5TEU4">
    <property type="GO annotations" value="2 GO annotations based on evolutionary models"/>
</dbReference>
<dbReference type="PhylomeDB" id="Q5TEU4"/>
<dbReference type="TreeFam" id="TF315222"/>
<dbReference type="PathwayCommons" id="Q5TEU4"/>
<dbReference type="Reactome" id="R-HSA-6799198">
    <property type="pathway name" value="Complex I biogenesis"/>
</dbReference>
<dbReference type="SignaLink" id="Q5TEU4"/>
<dbReference type="BioGRID-ORCS" id="79133">
    <property type="hits" value="134 hits in 1168 CRISPR screens"/>
</dbReference>
<dbReference type="ChiTaRS" id="NDUFAF5">
    <property type="organism name" value="human"/>
</dbReference>
<dbReference type="GenomeRNAi" id="79133"/>
<dbReference type="Pharos" id="Q5TEU4">
    <property type="development level" value="Tbio"/>
</dbReference>
<dbReference type="PRO" id="PR:Q5TEU4"/>
<dbReference type="Proteomes" id="UP000005640">
    <property type="component" value="Chromosome 20"/>
</dbReference>
<dbReference type="RNAct" id="Q5TEU4">
    <property type="molecule type" value="protein"/>
</dbReference>
<dbReference type="Bgee" id="ENSG00000101247">
    <property type="expression patterns" value="Expressed in apex of heart and 180 other cell types or tissues"/>
</dbReference>
<dbReference type="ExpressionAtlas" id="Q5TEU4">
    <property type="expression patterns" value="baseline and differential"/>
</dbReference>
<dbReference type="GO" id="GO:0099617">
    <property type="term" value="C:matrix side of mitochondrial inner membrane"/>
    <property type="evidence" value="ECO:0000314"/>
    <property type="project" value="UniProtKB"/>
</dbReference>
<dbReference type="GO" id="GO:0005743">
    <property type="term" value="C:mitochondrial inner membrane"/>
    <property type="evidence" value="ECO:0000304"/>
    <property type="project" value="Reactome"/>
</dbReference>
<dbReference type="GO" id="GO:0005739">
    <property type="term" value="C:mitochondrion"/>
    <property type="evidence" value="ECO:0000314"/>
    <property type="project" value="UniProtKB"/>
</dbReference>
<dbReference type="GO" id="GO:0004497">
    <property type="term" value="F:monooxygenase activity"/>
    <property type="evidence" value="ECO:0000250"/>
    <property type="project" value="UniProtKB"/>
</dbReference>
<dbReference type="GO" id="GO:0008757">
    <property type="term" value="F:S-adenosylmethionine-dependent methyltransferase activity"/>
    <property type="evidence" value="ECO:0007669"/>
    <property type="project" value="InterPro"/>
</dbReference>
<dbReference type="GO" id="GO:0032259">
    <property type="term" value="P:methylation"/>
    <property type="evidence" value="ECO:0007669"/>
    <property type="project" value="UniProtKB-KW"/>
</dbReference>
<dbReference type="GO" id="GO:0032981">
    <property type="term" value="P:mitochondrial respiratory chain complex I assembly"/>
    <property type="evidence" value="ECO:0000315"/>
    <property type="project" value="UniProtKB"/>
</dbReference>
<dbReference type="CDD" id="cd02440">
    <property type="entry name" value="AdoMet_MTases"/>
    <property type="match status" value="1"/>
</dbReference>
<dbReference type="FunFam" id="3.40.50.150:FF:000199">
    <property type="entry name" value="arginine-hydroxylase NDUFAF5, mitochondrial isoform X1"/>
    <property type="match status" value="1"/>
</dbReference>
<dbReference type="Gene3D" id="3.40.50.150">
    <property type="entry name" value="Vaccinia Virus protein VP39"/>
    <property type="match status" value="1"/>
</dbReference>
<dbReference type="InterPro" id="IPR050602">
    <property type="entry name" value="Malonyl-ACP_OMT"/>
</dbReference>
<dbReference type="InterPro" id="IPR013216">
    <property type="entry name" value="Methyltransf_11"/>
</dbReference>
<dbReference type="InterPro" id="IPR029063">
    <property type="entry name" value="SAM-dependent_MTases_sf"/>
</dbReference>
<dbReference type="PANTHER" id="PTHR13090">
    <property type="entry name" value="ARGININE-HYDROXYLASE NDUFAF5, MITOCHONDRIAL"/>
    <property type="match status" value="1"/>
</dbReference>
<dbReference type="PANTHER" id="PTHR13090:SF1">
    <property type="entry name" value="ARGININE-HYDROXYLASE NDUFAF5, MITOCHONDRIAL"/>
    <property type="match status" value="1"/>
</dbReference>
<dbReference type="Pfam" id="PF08241">
    <property type="entry name" value="Methyltransf_11"/>
    <property type="match status" value="1"/>
</dbReference>
<dbReference type="SUPFAM" id="SSF53335">
    <property type="entry name" value="S-adenosyl-L-methionine-dependent methyltransferases"/>
    <property type="match status" value="1"/>
</dbReference>
<organism>
    <name type="scientific">Homo sapiens</name>
    <name type="common">Human</name>
    <dbReference type="NCBI Taxonomy" id="9606"/>
    <lineage>
        <taxon>Eukaryota</taxon>
        <taxon>Metazoa</taxon>
        <taxon>Chordata</taxon>
        <taxon>Craniata</taxon>
        <taxon>Vertebrata</taxon>
        <taxon>Euteleostomi</taxon>
        <taxon>Mammalia</taxon>
        <taxon>Eutheria</taxon>
        <taxon>Euarchontoglires</taxon>
        <taxon>Primates</taxon>
        <taxon>Haplorrhini</taxon>
        <taxon>Catarrhini</taxon>
        <taxon>Hominidae</taxon>
        <taxon>Homo</taxon>
    </lineage>
</organism>
<gene>
    <name evidence="11" type="primary">NDUFAF5</name>
    <name evidence="11" type="synonym">C20orf7</name>
</gene>
<proteinExistence type="evidence at protein level"/>
<evidence type="ECO:0000255" key="1"/>
<evidence type="ECO:0000269" key="2">
    <source>
    </source>
</evidence>
<evidence type="ECO:0000269" key="3">
    <source>
    </source>
</evidence>
<evidence type="ECO:0000269" key="4">
    <source>
    </source>
</evidence>
<evidence type="ECO:0000269" key="5">
    <source>
    </source>
</evidence>
<evidence type="ECO:0000269" key="6">
    <source>
    </source>
</evidence>
<evidence type="ECO:0000269" key="7">
    <source>
    </source>
</evidence>
<evidence type="ECO:0000303" key="8">
    <source>
    </source>
</evidence>
<evidence type="ECO:0000305" key="9"/>
<evidence type="ECO:0000305" key="10">
    <source>
    </source>
</evidence>
<evidence type="ECO:0000312" key="11">
    <source>
        <dbReference type="HGNC" id="HGNC:15899"/>
    </source>
</evidence>
<accession>Q5TEU4</accession>
<accession>A8K166</accession>
<accession>Q6GPH3</accession>
<accession>Q9H6F4</accession>